<sequence length="254" mass="27923">MLKNKKSDNSLSRDTLQIKKRKKTTMAQNGSNTTVKLIGTWASPFAIRAQVALHLKSVEHEYVEETDVLKGKSDLLIKSNPIHKKVPVLIHGDVSICESLNIVQYVDESWPSDLSILPTLPSERAFARFWAHFVDGKLFESIDAVAGAKDDAARMTLAGNLMENLAALEEAFQKSSKGGDFFGGGNIGFVDITVGAIVGPISVIEAFSGVKFLRPDTTPGLIQWAEKFRAHEAVKPYMPTVAEFIEFAKKKFSV</sequence>
<comment type="function">
    <text evidence="1">May be involved in the conjugation of reduced glutathione to a wide number of exogenous and endogenous hydrophobic electrophiles and have a detoxification role against certain herbicides.</text>
</comment>
<comment type="catalytic activity">
    <reaction>
        <text>RX + glutathione = an S-substituted glutathione + a halide anion + H(+)</text>
        <dbReference type="Rhea" id="RHEA:16437"/>
        <dbReference type="ChEBI" id="CHEBI:15378"/>
        <dbReference type="ChEBI" id="CHEBI:16042"/>
        <dbReference type="ChEBI" id="CHEBI:17792"/>
        <dbReference type="ChEBI" id="CHEBI:57925"/>
        <dbReference type="ChEBI" id="CHEBI:90779"/>
        <dbReference type="EC" id="2.5.1.18"/>
    </reaction>
</comment>
<comment type="subcellular location">
    <subcellularLocation>
        <location evidence="4">Nucleus</location>
    </subcellularLocation>
</comment>
<comment type="induction">
    <text evidence="3">By fungal elicitor.</text>
</comment>
<comment type="similarity">
    <text evidence="5">Belongs to the GST superfamily. Tau family.</text>
</comment>
<comment type="sequence caution" evidence="5">
    <conflict type="erroneous initiation">
        <sequence resource="EMBL-CDS" id="AAG52553"/>
    </conflict>
    <text>Truncated N-terminus.</text>
</comment>
<protein>
    <recommendedName>
        <fullName>Glutathione S-transferase U12</fullName>
        <shortName>AtGSTU12</shortName>
        <ecNumber>2.5.1.18</ecNumber>
    </recommendedName>
    <alternativeName>
        <fullName>GST class-tau member 12</fullName>
    </alternativeName>
</protein>
<feature type="chain" id="PRO_0000413558" description="Glutathione S-transferase U12">
    <location>
        <begin position="1"/>
        <end position="254"/>
    </location>
</feature>
<feature type="domain" description="GST N-terminal">
    <location>
        <begin position="33"/>
        <end position="114"/>
    </location>
</feature>
<feature type="domain" description="GST C-terminal">
    <location>
        <begin position="120"/>
        <end position="252"/>
    </location>
</feature>
<feature type="short sequence motif" description="Nuclear localization signal" evidence="2">
    <location>
        <begin position="19"/>
        <end position="23"/>
    </location>
</feature>
<feature type="binding site" evidence="1">
    <location>
        <begin position="43"/>
        <end position="44"/>
    </location>
    <ligand>
        <name>glutathione</name>
        <dbReference type="ChEBI" id="CHEBI:57925"/>
    </ligand>
</feature>
<feature type="binding site" evidence="1">
    <location>
        <begin position="71"/>
        <end position="72"/>
    </location>
    <ligand>
        <name>glutathione</name>
        <dbReference type="ChEBI" id="CHEBI:57925"/>
    </ligand>
</feature>
<feature type="binding site" evidence="1">
    <location>
        <begin position="85"/>
        <end position="86"/>
    </location>
    <ligand>
        <name>glutathione</name>
        <dbReference type="ChEBI" id="CHEBI:57925"/>
    </ligand>
</feature>
<feature type="binding site" evidence="1">
    <location>
        <begin position="98"/>
        <end position="99"/>
    </location>
    <ligand>
        <name>glutathione</name>
        <dbReference type="ChEBI" id="CHEBI:57925"/>
    </ligand>
</feature>
<feature type="sequence conflict" description="In Ref. 3; AAR20744/AAS46639." evidence="5" ref="3">
    <original>F</original>
    <variation>S</variation>
    <location>
        <position position="244"/>
    </location>
</feature>
<keyword id="KW-0216">Detoxification</keyword>
<keyword id="KW-0539">Nucleus</keyword>
<keyword id="KW-1185">Reference proteome</keyword>
<keyword id="KW-0346">Stress response</keyword>
<keyword id="KW-0808">Transferase</keyword>
<proteinExistence type="evidence at transcript level"/>
<reference key="1">
    <citation type="journal article" date="2000" name="Nature">
        <title>Sequence and analysis of chromosome 1 of the plant Arabidopsis thaliana.</title>
        <authorList>
            <person name="Theologis A."/>
            <person name="Ecker J.R."/>
            <person name="Palm C.J."/>
            <person name="Federspiel N.A."/>
            <person name="Kaul S."/>
            <person name="White O."/>
            <person name="Alonso J."/>
            <person name="Altafi H."/>
            <person name="Araujo R."/>
            <person name="Bowman C.L."/>
            <person name="Brooks S.Y."/>
            <person name="Buehler E."/>
            <person name="Chan A."/>
            <person name="Chao Q."/>
            <person name="Chen H."/>
            <person name="Cheuk R.F."/>
            <person name="Chin C.W."/>
            <person name="Chung M.K."/>
            <person name="Conn L."/>
            <person name="Conway A.B."/>
            <person name="Conway A.R."/>
            <person name="Creasy T.H."/>
            <person name="Dewar K."/>
            <person name="Dunn P."/>
            <person name="Etgu P."/>
            <person name="Feldblyum T.V."/>
            <person name="Feng J.-D."/>
            <person name="Fong B."/>
            <person name="Fujii C.Y."/>
            <person name="Gill J.E."/>
            <person name="Goldsmith A.D."/>
            <person name="Haas B."/>
            <person name="Hansen N.F."/>
            <person name="Hughes B."/>
            <person name="Huizar L."/>
            <person name="Hunter J.L."/>
            <person name="Jenkins J."/>
            <person name="Johnson-Hopson C."/>
            <person name="Khan S."/>
            <person name="Khaykin E."/>
            <person name="Kim C.J."/>
            <person name="Koo H.L."/>
            <person name="Kremenetskaia I."/>
            <person name="Kurtz D.B."/>
            <person name="Kwan A."/>
            <person name="Lam B."/>
            <person name="Langin-Hooper S."/>
            <person name="Lee A."/>
            <person name="Lee J.M."/>
            <person name="Lenz C.A."/>
            <person name="Li J.H."/>
            <person name="Li Y.-P."/>
            <person name="Lin X."/>
            <person name="Liu S.X."/>
            <person name="Liu Z.A."/>
            <person name="Luros J.S."/>
            <person name="Maiti R."/>
            <person name="Marziali A."/>
            <person name="Militscher J."/>
            <person name="Miranda M."/>
            <person name="Nguyen M."/>
            <person name="Nierman W.C."/>
            <person name="Osborne B.I."/>
            <person name="Pai G."/>
            <person name="Peterson J."/>
            <person name="Pham P.K."/>
            <person name="Rizzo M."/>
            <person name="Rooney T."/>
            <person name="Rowley D."/>
            <person name="Sakano H."/>
            <person name="Salzberg S.L."/>
            <person name="Schwartz J.R."/>
            <person name="Shinn P."/>
            <person name="Southwick A.M."/>
            <person name="Sun H."/>
            <person name="Tallon L.J."/>
            <person name="Tambunga G."/>
            <person name="Toriumi M.J."/>
            <person name="Town C.D."/>
            <person name="Utterback T."/>
            <person name="Van Aken S."/>
            <person name="Vaysberg M."/>
            <person name="Vysotskaia V.S."/>
            <person name="Walker M."/>
            <person name="Wu D."/>
            <person name="Yu G."/>
            <person name="Fraser C.M."/>
            <person name="Venter J.C."/>
            <person name="Davis R.W."/>
        </authorList>
    </citation>
    <scope>NUCLEOTIDE SEQUENCE [LARGE SCALE GENOMIC DNA]</scope>
    <source>
        <strain>cv. Columbia</strain>
    </source>
</reference>
<reference key="2">
    <citation type="journal article" date="2017" name="Plant J.">
        <title>Araport11: a complete reannotation of the Arabidopsis thaliana reference genome.</title>
        <authorList>
            <person name="Cheng C.Y."/>
            <person name="Krishnakumar V."/>
            <person name="Chan A.P."/>
            <person name="Thibaud-Nissen F."/>
            <person name="Schobel S."/>
            <person name="Town C.D."/>
        </authorList>
    </citation>
    <scope>GENOME REANNOTATION</scope>
    <source>
        <strain>cv. Columbia</strain>
    </source>
</reference>
<reference key="3">
    <citation type="journal article" date="2003" name="Science">
        <title>Empirical analysis of transcriptional activity in the Arabidopsis genome.</title>
        <authorList>
            <person name="Yamada K."/>
            <person name="Lim J."/>
            <person name="Dale J.M."/>
            <person name="Chen H."/>
            <person name="Shinn P."/>
            <person name="Palm C.J."/>
            <person name="Southwick A.M."/>
            <person name="Wu H.C."/>
            <person name="Kim C.J."/>
            <person name="Nguyen M."/>
            <person name="Pham P.K."/>
            <person name="Cheuk R.F."/>
            <person name="Karlin-Newmann G."/>
            <person name="Liu S.X."/>
            <person name="Lam B."/>
            <person name="Sakano H."/>
            <person name="Wu T."/>
            <person name="Yu G."/>
            <person name="Miranda M."/>
            <person name="Quach H.L."/>
            <person name="Tripp M."/>
            <person name="Chang C.H."/>
            <person name="Lee J.M."/>
            <person name="Toriumi M.J."/>
            <person name="Chan M.M."/>
            <person name="Tang C.C."/>
            <person name="Onodera C.S."/>
            <person name="Deng J.M."/>
            <person name="Akiyama K."/>
            <person name="Ansari Y."/>
            <person name="Arakawa T."/>
            <person name="Banh J."/>
            <person name="Banno F."/>
            <person name="Bowser L."/>
            <person name="Brooks S.Y."/>
            <person name="Carninci P."/>
            <person name="Chao Q."/>
            <person name="Choy N."/>
            <person name="Enju A."/>
            <person name="Goldsmith A.D."/>
            <person name="Gurjal M."/>
            <person name="Hansen N.F."/>
            <person name="Hayashizaki Y."/>
            <person name="Johnson-Hopson C."/>
            <person name="Hsuan V.W."/>
            <person name="Iida K."/>
            <person name="Karnes M."/>
            <person name="Khan S."/>
            <person name="Koesema E."/>
            <person name="Ishida J."/>
            <person name="Jiang P.X."/>
            <person name="Jones T."/>
            <person name="Kawai J."/>
            <person name="Kamiya A."/>
            <person name="Meyers C."/>
            <person name="Nakajima M."/>
            <person name="Narusaka M."/>
            <person name="Seki M."/>
            <person name="Sakurai T."/>
            <person name="Satou M."/>
            <person name="Tamse R."/>
            <person name="Vaysberg M."/>
            <person name="Wallender E.K."/>
            <person name="Wong C."/>
            <person name="Yamamura Y."/>
            <person name="Yuan S."/>
            <person name="Shinozaki K."/>
            <person name="Davis R.W."/>
            <person name="Theologis A."/>
            <person name="Ecker J.R."/>
        </authorList>
    </citation>
    <scope>NUCLEOTIDE SEQUENCE [LARGE SCALE MRNA]</scope>
    <source>
        <strain>cv. Columbia</strain>
    </source>
</reference>
<reference key="4">
    <citation type="journal article" date="2002" name="Plant Mol. Biol.">
        <title>Probing the diversity of the Arabidopsis glutathione S-transferase gene family.</title>
        <authorList>
            <person name="Wagner U."/>
            <person name="Edwards R."/>
            <person name="Dixon D.P."/>
            <person name="Mauch F."/>
        </authorList>
    </citation>
    <scope>GENE FAMILY</scope>
    <scope>NOMENCLATURE</scope>
</reference>
<reference key="5">
    <citation type="journal article" date="2006" name="Plant Physiol.">
        <title>Necrosis- and ethylene-inducing peptide from Fusarium oxysporum induces a complex cascade of transcripts associated with signal transduction and cell death in Arabidopsis.</title>
        <authorList>
            <person name="Bae H."/>
            <person name="Kim M.S."/>
            <person name="Sicher R.C."/>
            <person name="Bae H.J."/>
            <person name="Bailey B.A."/>
        </authorList>
    </citation>
    <scope>INDUCTION</scope>
</reference>
<reference key="6">
    <citation type="journal article" date="2009" name="J. Exp. Bot.">
        <title>Enzyme activities and subcellular localization of members of the Arabidopsis glutathione transferase superfamily.</title>
        <authorList>
            <person name="Dixon D.P."/>
            <person name="Hawkins T."/>
            <person name="Hussey P.J."/>
            <person name="Edwards R."/>
        </authorList>
    </citation>
    <scope>SUBCELLULAR LOCATION</scope>
</reference>
<name>GSTUC_ARATH</name>
<evidence type="ECO:0000250" key="1"/>
<evidence type="ECO:0000255" key="2"/>
<evidence type="ECO:0000269" key="3">
    <source>
    </source>
</evidence>
<evidence type="ECO:0000269" key="4">
    <source>
    </source>
</evidence>
<evidence type="ECO:0000305" key="5"/>
<dbReference type="EC" id="2.5.1.18"/>
<dbReference type="EMBL" id="AC010675">
    <property type="protein sequence ID" value="AAG52553.1"/>
    <property type="status" value="ALT_INIT"/>
    <property type="molecule type" value="Genomic_DNA"/>
</dbReference>
<dbReference type="EMBL" id="CP002684">
    <property type="protein sequence ID" value="AEE34998.1"/>
    <property type="molecule type" value="Genomic_DNA"/>
</dbReference>
<dbReference type="EMBL" id="BT010687">
    <property type="protein sequence ID" value="AAR20744.1"/>
    <property type="molecule type" value="mRNA"/>
</dbReference>
<dbReference type="EMBL" id="BT011586">
    <property type="protein sequence ID" value="AAS46639.1"/>
    <property type="molecule type" value="mRNA"/>
</dbReference>
<dbReference type="PIR" id="F96721">
    <property type="entry name" value="F96721"/>
</dbReference>
<dbReference type="RefSeq" id="NP_177150.2">
    <property type="nucleotide sequence ID" value="NM_105660.6"/>
</dbReference>
<dbReference type="SMR" id="Q6NMS0"/>
<dbReference type="FunCoup" id="Q6NMS0">
    <property type="interactions" value="102"/>
</dbReference>
<dbReference type="STRING" id="3702.Q6NMS0"/>
<dbReference type="PaxDb" id="3702-AT1G69920.1"/>
<dbReference type="ProteomicsDB" id="247338"/>
<dbReference type="EnsemblPlants" id="AT1G69920.1">
    <property type="protein sequence ID" value="AT1G69920.1"/>
    <property type="gene ID" value="AT1G69920"/>
</dbReference>
<dbReference type="GeneID" id="843328"/>
<dbReference type="Gramene" id="AT1G69920.1">
    <property type="protein sequence ID" value="AT1G69920.1"/>
    <property type="gene ID" value="AT1G69920"/>
</dbReference>
<dbReference type="KEGG" id="ath:AT1G69920"/>
<dbReference type="Araport" id="AT1G69920"/>
<dbReference type="TAIR" id="AT1G69920">
    <property type="gene designation" value="GSTU12"/>
</dbReference>
<dbReference type="eggNOG" id="KOG0406">
    <property type="taxonomic scope" value="Eukaryota"/>
</dbReference>
<dbReference type="HOGENOM" id="CLU_011226_18_0_1"/>
<dbReference type="InParanoid" id="Q6NMS0"/>
<dbReference type="OMA" id="DDSICES"/>
<dbReference type="BioCyc" id="ARA:AT1G69920-MONOMER"/>
<dbReference type="PRO" id="PR:Q6NMS0"/>
<dbReference type="Proteomes" id="UP000006548">
    <property type="component" value="Chromosome 1"/>
</dbReference>
<dbReference type="ExpressionAtlas" id="Q6NMS0">
    <property type="expression patterns" value="baseline and differential"/>
</dbReference>
<dbReference type="GO" id="GO:0005737">
    <property type="term" value="C:cytoplasm"/>
    <property type="evidence" value="ECO:0000303"/>
    <property type="project" value="TAIR"/>
</dbReference>
<dbReference type="GO" id="GO:0005634">
    <property type="term" value="C:nucleus"/>
    <property type="evidence" value="ECO:0007669"/>
    <property type="project" value="UniProtKB-SubCell"/>
</dbReference>
<dbReference type="GO" id="GO:0004364">
    <property type="term" value="F:glutathione transferase activity"/>
    <property type="evidence" value="ECO:0000314"/>
    <property type="project" value="TAIR"/>
</dbReference>
<dbReference type="GO" id="GO:0006749">
    <property type="term" value="P:glutathione metabolic process"/>
    <property type="evidence" value="ECO:0000314"/>
    <property type="project" value="TAIR"/>
</dbReference>
<dbReference type="GO" id="GO:0009407">
    <property type="term" value="P:toxin catabolic process"/>
    <property type="evidence" value="ECO:0000304"/>
    <property type="project" value="TAIR"/>
</dbReference>
<dbReference type="CDD" id="cd03185">
    <property type="entry name" value="GST_C_Tau"/>
    <property type="match status" value="1"/>
</dbReference>
<dbReference type="CDD" id="cd03058">
    <property type="entry name" value="GST_N_Tau"/>
    <property type="match status" value="1"/>
</dbReference>
<dbReference type="FunFam" id="3.40.30.10:FF:000044">
    <property type="entry name" value="Glutathione S-transferase GSTU6"/>
    <property type="match status" value="1"/>
</dbReference>
<dbReference type="FunFam" id="1.20.1050.10:FF:000016">
    <property type="entry name" value="Glutathione S-transferase U9"/>
    <property type="match status" value="1"/>
</dbReference>
<dbReference type="Gene3D" id="1.20.1050.10">
    <property type="match status" value="1"/>
</dbReference>
<dbReference type="Gene3D" id="3.40.30.10">
    <property type="entry name" value="Glutaredoxin"/>
    <property type="match status" value="1"/>
</dbReference>
<dbReference type="InterPro" id="IPR010987">
    <property type="entry name" value="Glutathione-S-Trfase_C-like"/>
</dbReference>
<dbReference type="InterPro" id="IPR036282">
    <property type="entry name" value="Glutathione-S-Trfase_C_sf"/>
</dbReference>
<dbReference type="InterPro" id="IPR040079">
    <property type="entry name" value="Glutathione_S-Trfase"/>
</dbReference>
<dbReference type="InterPro" id="IPR004045">
    <property type="entry name" value="Glutathione_S-Trfase_N"/>
</dbReference>
<dbReference type="InterPro" id="IPR045074">
    <property type="entry name" value="GST_C_Tau"/>
</dbReference>
<dbReference type="InterPro" id="IPR045073">
    <property type="entry name" value="Omega/Tau-like"/>
</dbReference>
<dbReference type="InterPro" id="IPR036249">
    <property type="entry name" value="Thioredoxin-like_sf"/>
</dbReference>
<dbReference type="PANTHER" id="PTHR11260:SF564">
    <property type="entry name" value="GLUTATHIONE S-TRANSFERASE U12"/>
    <property type="match status" value="1"/>
</dbReference>
<dbReference type="PANTHER" id="PTHR11260">
    <property type="entry name" value="GLUTATHIONE S-TRANSFERASE, GST, SUPERFAMILY, GST DOMAIN CONTAINING"/>
    <property type="match status" value="1"/>
</dbReference>
<dbReference type="Pfam" id="PF02798">
    <property type="entry name" value="GST_N"/>
    <property type="match status" value="1"/>
</dbReference>
<dbReference type="SFLD" id="SFLDS00019">
    <property type="entry name" value="Glutathione_Transferase_(cytos"/>
    <property type="match status" value="1"/>
</dbReference>
<dbReference type="SFLD" id="SFLDG01152">
    <property type="entry name" value="Main.3:_Omega-_and_Tau-like"/>
    <property type="match status" value="1"/>
</dbReference>
<dbReference type="SUPFAM" id="SSF47616">
    <property type="entry name" value="GST C-terminal domain-like"/>
    <property type="match status" value="1"/>
</dbReference>
<dbReference type="SUPFAM" id="SSF52833">
    <property type="entry name" value="Thioredoxin-like"/>
    <property type="match status" value="1"/>
</dbReference>
<dbReference type="PROSITE" id="PS50405">
    <property type="entry name" value="GST_CTER"/>
    <property type="match status" value="1"/>
</dbReference>
<dbReference type="PROSITE" id="PS50404">
    <property type="entry name" value="GST_NTER"/>
    <property type="match status" value="1"/>
</dbReference>
<gene>
    <name type="primary">GSTU12</name>
    <name type="ordered locus">At1g69920</name>
    <name type="ORF">T17F3.5</name>
</gene>
<accession>Q6NMS0</accession>
<accession>F4I3V4</accession>
<accession>Q9CAS5</accession>
<organism>
    <name type="scientific">Arabidopsis thaliana</name>
    <name type="common">Mouse-ear cress</name>
    <dbReference type="NCBI Taxonomy" id="3702"/>
    <lineage>
        <taxon>Eukaryota</taxon>
        <taxon>Viridiplantae</taxon>
        <taxon>Streptophyta</taxon>
        <taxon>Embryophyta</taxon>
        <taxon>Tracheophyta</taxon>
        <taxon>Spermatophyta</taxon>
        <taxon>Magnoliopsida</taxon>
        <taxon>eudicotyledons</taxon>
        <taxon>Gunneridae</taxon>
        <taxon>Pentapetalae</taxon>
        <taxon>rosids</taxon>
        <taxon>malvids</taxon>
        <taxon>Brassicales</taxon>
        <taxon>Brassicaceae</taxon>
        <taxon>Camelineae</taxon>
        <taxon>Arabidopsis</taxon>
    </lineage>
</organism>